<evidence type="ECO:0000256" key="1">
    <source>
        <dbReference type="SAM" id="MobiDB-lite"/>
    </source>
</evidence>
<evidence type="ECO:0000269" key="2">
    <source>
    </source>
</evidence>
<keyword id="KW-0539">Nucleus</keyword>
<keyword id="KW-1185">Reference proteome</keyword>
<sequence>MSKLKAQSALQKLIESQKNPNANEDGYFRRKRLAKKERPFEPKKLVQQQQRLKEKKKNENIIYLKKTMRVTPSEEKIHEMINQKRETKKRKRKQKKKNDDDYGVFEEDMLEL</sequence>
<accession>Q9UTM1</accession>
<gene>
    <name type="ORF">SPAC144.01</name>
</gene>
<protein>
    <recommendedName>
        <fullName>Uncharacterized protein C144.01</fullName>
    </recommendedName>
</protein>
<feature type="chain" id="PRO_0000304007" description="Uncharacterized protein C144.01">
    <location>
        <begin position="1"/>
        <end position="112"/>
    </location>
</feature>
<feature type="region of interest" description="Disordered" evidence="1">
    <location>
        <begin position="1"/>
        <end position="53"/>
    </location>
</feature>
<feature type="region of interest" description="Disordered" evidence="1">
    <location>
        <begin position="80"/>
        <end position="112"/>
    </location>
</feature>
<feature type="compositionally biased region" description="Polar residues" evidence="1">
    <location>
        <begin position="8"/>
        <end position="22"/>
    </location>
</feature>
<feature type="compositionally biased region" description="Basic residues" evidence="1">
    <location>
        <begin position="86"/>
        <end position="96"/>
    </location>
</feature>
<feature type="compositionally biased region" description="Acidic residues" evidence="1">
    <location>
        <begin position="101"/>
        <end position="112"/>
    </location>
</feature>
<comment type="subcellular location">
    <subcellularLocation>
        <location evidence="2">Nucleus</location>
        <location evidence="2">Nucleolus</location>
    </subcellularLocation>
</comment>
<reference key="1">
    <citation type="journal article" date="2002" name="Nature">
        <title>The genome sequence of Schizosaccharomyces pombe.</title>
        <authorList>
            <person name="Wood V."/>
            <person name="Gwilliam R."/>
            <person name="Rajandream M.A."/>
            <person name="Lyne M.H."/>
            <person name="Lyne R."/>
            <person name="Stewart A."/>
            <person name="Sgouros J.G."/>
            <person name="Peat N."/>
            <person name="Hayles J."/>
            <person name="Baker S.G."/>
            <person name="Basham D."/>
            <person name="Bowman S."/>
            <person name="Brooks K."/>
            <person name="Brown D."/>
            <person name="Brown S."/>
            <person name="Chillingworth T."/>
            <person name="Churcher C.M."/>
            <person name="Collins M."/>
            <person name="Connor R."/>
            <person name="Cronin A."/>
            <person name="Davis P."/>
            <person name="Feltwell T."/>
            <person name="Fraser A."/>
            <person name="Gentles S."/>
            <person name="Goble A."/>
            <person name="Hamlin N."/>
            <person name="Harris D.E."/>
            <person name="Hidalgo J."/>
            <person name="Hodgson G."/>
            <person name="Holroyd S."/>
            <person name="Hornsby T."/>
            <person name="Howarth S."/>
            <person name="Huckle E.J."/>
            <person name="Hunt S."/>
            <person name="Jagels K."/>
            <person name="James K.D."/>
            <person name="Jones L."/>
            <person name="Jones M."/>
            <person name="Leather S."/>
            <person name="McDonald S."/>
            <person name="McLean J."/>
            <person name="Mooney P."/>
            <person name="Moule S."/>
            <person name="Mungall K.L."/>
            <person name="Murphy L.D."/>
            <person name="Niblett D."/>
            <person name="Odell C."/>
            <person name="Oliver K."/>
            <person name="O'Neil S."/>
            <person name="Pearson D."/>
            <person name="Quail M.A."/>
            <person name="Rabbinowitsch E."/>
            <person name="Rutherford K.M."/>
            <person name="Rutter S."/>
            <person name="Saunders D."/>
            <person name="Seeger K."/>
            <person name="Sharp S."/>
            <person name="Skelton J."/>
            <person name="Simmonds M.N."/>
            <person name="Squares R."/>
            <person name="Squares S."/>
            <person name="Stevens K."/>
            <person name="Taylor K."/>
            <person name="Taylor R.G."/>
            <person name="Tivey A."/>
            <person name="Walsh S.V."/>
            <person name="Warren T."/>
            <person name="Whitehead S."/>
            <person name="Woodward J.R."/>
            <person name="Volckaert G."/>
            <person name="Aert R."/>
            <person name="Robben J."/>
            <person name="Grymonprez B."/>
            <person name="Weltjens I."/>
            <person name="Vanstreels E."/>
            <person name="Rieger M."/>
            <person name="Schaefer M."/>
            <person name="Mueller-Auer S."/>
            <person name="Gabel C."/>
            <person name="Fuchs M."/>
            <person name="Duesterhoeft A."/>
            <person name="Fritzc C."/>
            <person name="Holzer E."/>
            <person name="Moestl D."/>
            <person name="Hilbert H."/>
            <person name="Borzym K."/>
            <person name="Langer I."/>
            <person name="Beck A."/>
            <person name="Lehrach H."/>
            <person name="Reinhardt R."/>
            <person name="Pohl T.M."/>
            <person name="Eger P."/>
            <person name="Zimmermann W."/>
            <person name="Wedler H."/>
            <person name="Wambutt R."/>
            <person name="Purnelle B."/>
            <person name="Goffeau A."/>
            <person name="Cadieu E."/>
            <person name="Dreano S."/>
            <person name="Gloux S."/>
            <person name="Lelaure V."/>
            <person name="Mottier S."/>
            <person name="Galibert F."/>
            <person name="Aves S.J."/>
            <person name="Xiang Z."/>
            <person name="Hunt C."/>
            <person name="Moore K."/>
            <person name="Hurst S.M."/>
            <person name="Lucas M."/>
            <person name="Rochet M."/>
            <person name="Gaillardin C."/>
            <person name="Tallada V.A."/>
            <person name="Garzon A."/>
            <person name="Thode G."/>
            <person name="Daga R.R."/>
            <person name="Cruzado L."/>
            <person name="Jimenez J."/>
            <person name="Sanchez M."/>
            <person name="del Rey F."/>
            <person name="Benito J."/>
            <person name="Dominguez A."/>
            <person name="Revuelta J.L."/>
            <person name="Moreno S."/>
            <person name="Armstrong J."/>
            <person name="Forsburg S.L."/>
            <person name="Cerutti L."/>
            <person name="Lowe T."/>
            <person name="McCombie W.R."/>
            <person name="Paulsen I."/>
            <person name="Potashkin J."/>
            <person name="Shpakovski G.V."/>
            <person name="Ussery D."/>
            <person name="Barrell B.G."/>
            <person name="Nurse P."/>
        </authorList>
    </citation>
    <scope>NUCLEOTIDE SEQUENCE [LARGE SCALE GENOMIC DNA]</scope>
    <source>
        <strain>972 / ATCC 24843</strain>
    </source>
</reference>
<reference key="2">
    <citation type="journal article" date="2006" name="Nat. Biotechnol.">
        <title>ORFeome cloning and global analysis of protein localization in the fission yeast Schizosaccharomyces pombe.</title>
        <authorList>
            <person name="Matsuyama A."/>
            <person name="Arai R."/>
            <person name="Yashiroda Y."/>
            <person name="Shirai A."/>
            <person name="Kamata A."/>
            <person name="Sekido S."/>
            <person name="Kobayashi Y."/>
            <person name="Hashimoto A."/>
            <person name="Hamamoto M."/>
            <person name="Hiraoka Y."/>
            <person name="Horinouchi S."/>
            <person name="Yoshida M."/>
        </authorList>
    </citation>
    <scope>SUBCELLULAR LOCATION [LARGE SCALE ANALYSIS]</scope>
</reference>
<proteinExistence type="predicted"/>
<name>YIV1_SCHPO</name>
<organism>
    <name type="scientific">Schizosaccharomyces pombe (strain 972 / ATCC 24843)</name>
    <name type="common">Fission yeast</name>
    <dbReference type="NCBI Taxonomy" id="284812"/>
    <lineage>
        <taxon>Eukaryota</taxon>
        <taxon>Fungi</taxon>
        <taxon>Dikarya</taxon>
        <taxon>Ascomycota</taxon>
        <taxon>Taphrinomycotina</taxon>
        <taxon>Schizosaccharomycetes</taxon>
        <taxon>Schizosaccharomycetales</taxon>
        <taxon>Schizosaccharomycetaceae</taxon>
        <taxon>Schizosaccharomyces</taxon>
    </lineage>
</organism>
<dbReference type="EMBL" id="CU329670">
    <property type="protein sequence ID" value="CAB59681.1"/>
    <property type="molecule type" value="Genomic_DNA"/>
</dbReference>
<dbReference type="PIR" id="T37668">
    <property type="entry name" value="T37668"/>
</dbReference>
<dbReference type="RefSeq" id="NP_594662.1">
    <property type="nucleotide sequence ID" value="NM_001020091.2"/>
</dbReference>
<dbReference type="SMR" id="Q9UTM1"/>
<dbReference type="BioGRID" id="279310">
    <property type="interactions" value="6"/>
</dbReference>
<dbReference type="STRING" id="284812.Q9UTM1"/>
<dbReference type="PaxDb" id="4896-SPAC144.01.1"/>
<dbReference type="EnsemblFungi" id="SPAC144.01.1">
    <property type="protein sequence ID" value="SPAC144.01.1:pep"/>
    <property type="gene ID" value="SPAC144.01"/>
</dbReference>
<dbReference type="KEGG" id="spo:2542865"/>
<dbReference type="PomBase" id="SPAC144.01"/>
<dbReference type="VEuPathDB" id="FungiDB:SPAC144.01"/>
<dbReference type="HOGENOM" id="CLU_2159866_0_0_1"/>
<dbReference type="InParanoid" id="Q9UTM1"/>
<dbReference type="OMA" id="HDMISKK"/>
<dbReference type="PRO" id="PR:Q9UTM1"/>
<dbReference type="Proteomes" id="UP000002485">
    <property type="component" value="Chromosome I"/>
</dbReference>
<dbReference type="GO" id="GO:0005730">
    <property type="term" value="C:nucleolus"/>
    <property type="evidence" value="ECO:0007005"/>
    <property type="project" value="PomBase"/>
</dbReference>